<accession>Q8PH70</accession>
<gene>
    <name evidence="1" type="primary">rpmE2</name>
    <name type="synonym">rpmE</name>
    <name type="ordered locus">XAC3389</name>
</gene>
<reference key="1">
    <citation type="journal article" date="2002" name="Nature">
        <title>Comparison of the genomes of two Xanthomonas pathogens with differing host specificities.</title>
        <authorList>
            <person name="da Silva A.C.R."/>
            <person name="Ferro J.A."/>
            <person name="Reinach F.C."/>
            <person name="Farah C.S."/>
            <person name="Furlan L.R."/>
            <person name="Quaggio R.B."/>
            <person name="Monteiro-Vitorello C.B."/>
            <person name="Van Sluys M.A."/>
            <person name="Almeida N.F. Jr."/>
            <person name="Alves L.M.C."/>
            <person name="do Amaral A.M."/>
            <person name="Bertolini M.C."/>
            <person name="Camargo L.E.A."/>
            <person name="Camarotte G."/>
            <person name="Cannavan F."/>
            <person name="Cardozo J."/>
            <person name="Chambergo F."/>
            <person name="Ciapina L.P."/>
            <person name="Cicarelli R.M.B."/>
            <person name="Coutinho L.L."/>
            <person name="Cursino-Santos J.R."/>
            <person name="El-Dorry H."/>
            <person name="Faria J.B."/>
            <person name="Ferreira A.J.S."/>
            <person name="Ferreira R.C.C."/>
            <person name="Ferro M.I.T."/>
            <person name="Formighieri E.F."/>
            <person name="Franco M.C."/>
            <person name="Greggio C.C."/>
            <person name="Gruber A."/>
            <person name="Katsuyama A.M."/>
            <person name="Kishi L.T."/>
            <person name="Leite R.P."/>
            <person name="Lemos E.G.M."/>
            <person name="Lemos M.V.F."/>
            <person name="Locali E.C."/>
            <person name="Machado M.A."/>
            <person name="Madeira A.M.B.N."/>
            <person name="Martinez-Rossi N.M."/>
            <person name="Martins E.C."/>
            <person name="Meidanis J."/>
            <person name="Menck C.F.M."/>
            <person name="Miyaki C.Y."/>
            <person name="Moon D.H."/>
            <person name="Moreira L.M."/>
            <person name="Novo M.T.M."/>
            <person name="Okura V.K."/>
            <person name="Oliveira M.C."/>
            <person name="Oliveira V.R."/>
            <person name="Pereira H.A."/>
            <person name="Rossi A."/>
            <person name="Sena J.A.D."/>
            <person name="Silva C."/>
            <person name="de Souza R.F."/>
            <person name="Spinola L.A.F."/>
            <person name="Takita M.A."/>
            <person name="Tamura R.E."/>
            <person name="Teixeira E.C."/>
            <person name="Tezza R.I.D."/>
            <person name="Trindade dos Santos M."/>
            <person name="Truffi D."/>
            <person name="Tsai S.M."/>
            <person name="White F.F."/>
            <person name="Setubal J.C."/>
            <person name="Kitajima J.P."/>
        </authorList>
    </citation>
    <scope>NUCLEOTIDE SEQUENCE [LARGE SCALE GENOMIC DNA]</scope>
    <source>
        <strain>306</strain>
    </source>
</reference>
<proteinExistence type="inferred from homology"/>
<comment type="subunit">
    <text evidence="1">Part of the 50S ribosomal subunit.</text>
</comment>
<comment type="similarity">
    <text evidence="1">Belongs to the bacterial ribosomal protein bL31 family. Type B subfamily.</text>
</comment>
<feature type="chain" id="PRO_0000173284" description="Large ribosomal subunit protein bL31B">
    <location>
        <begin position="1"/>
        <end position="80"/>
    </location>
</feature>
<sequence length="80" mass="9364">MKDNVHPNYKDVVFHDVTSDFKILTRSTMTSKETVKWEDGQEYPLIKVEISSSSHPFYTGKHKVIDTGGRIDKFQKRYAR</sequence>
<organism>
    <name type="scientific">Xanthomonas axonopodis pv. citri (strain 306)</name>
    <dbReference type="NCBI Taxonomy" id="190486"/>
    <lineage>
        <taxon>Bacteria</taxon>
        <taxon>Pseudomonadati</taxon>
        <taxon>Pseudomonadota</taxon>
        <taxon>Gammaproteobacteria</taxon>
        <taxon>Lysobacterales</taxon>
        <taxon>Lysobacteraceae</taxon>
        <taxon>Xanthomonas</taxon>
    </lineage>
</organism>
<protein>
    <recommendedName>
        <fullName evidence="1">Large ribosomal subunit protein bL31B</fullName>
    </recommendedName>
    <alternativeName>
        <fullName evidence="2">50S ribosomal protein L31 type B</fullName>
    </alternativeName>
</protein>
<dbReference type="EMBL" id="AE008923">
    <property type="protein sequence ID" value="AAM38232.1"/>
    <property type="molecule type" value="Genomic_DNA"/>
</dbReference>
<dbReference type="RefSeq" id="WP_005911911.1">
    <property type="nucleotide sequence ID" value="NC_003919.1"/>
</dbReference>
<dbReference type="SMR" id="Q8PH70"/>
<dbReference type="KEGG" id="xac:XAC3389"/>
<dbReference type="eggNOG" id="COG0254">
    <property type="taxonomic scope" value="Bacteria"/>
</dbReference>
<dbReference type="HOGENOM" id="CLU_114306_2_2_6"/>
<dbReference type="Proteomes" id="UP000000576">
    <property type="component" value="Chromosome"/>
</dbReference>
<dbReference type="GO" id="GO:1990904">
    <property type="term" value="C:ribonucleoprotein complex"/>
    <property type="evidence" value="ECO:0007669"/>
    <property type="project" value="UniProtKB-KW"/>
</dbReference>
<dbReference type="GO" id="GO:0005840">
    <property type="term" value="C:ribosome"/>
    <property type="evidence" value="ECO:0007669"/>
    <property type="project" value="UniProtKB-KW"/>
</dbReference>
<dbReference type="GO" id="GO:0003735">
    <property type="term" value="F:structural constituent of ribosome"/>
    <property type="evidence" value="ECO:0007669"/>
    <property type="project" value="InterPro"/>
</dbReference>
<dbReference type="GO" id="GO:0006412">
    <property type="term" value="P:translation"/>
    <property type="evidence" value="ECO:0007669"/>
    <property type="project" value="UniProtKB-UniRule"/>
</dbReference>
<dbReference type="Gene3D" id="4.10.830.30">
    <property type="entry name" value="Ribosomal protein L31"/>
    <property type="match status" value="1"/>
</dbReference>
<dbReference type="HAMAP" id="MF_00502">
    <property type="entry name" value="Ribosomal_bL31_2"/>
    <property type="match status" value="1"/>
</dbReference>
<dbReference type="InterPro" id="IPR034704">
    <property type="entry name" value="Ribosomal_bL28/bL31-like_sf"/>
</dbReference>
<dbReference type="InterPro" id="IPR002150">
    <property type="entry name" value="Ribosomal_bL31"/>
</dbReference>
<dbReference type="InterPro" id="IPR027493">
    <property type="entry name" value="Ribosomal_bL31_B"/>
</dbReference>
<dbReference type="InterPro" id="IPR042105">
    <property type="entry name" value="Ribosomal_bL31_sf"/>
</dbReference>
<dbReference type="NCBIfam" id="TIGR00105">
    <property type="entry name" value="L31"/>
    <property type="match status" value="1"/>
</dbReference>
<dbReference type="NCBIfam" id="NF002462">
    <property type="entry name" value="PRK01678.1"/>
    <property type="match status" value="1"/>
</dbReference>
<dbReference type="PANTHER" id="PTHR33280">
    <property type="entry name" value="50S RIBOSOMAL PROTEIN L31, CHLOROPLASTIC"/>
    <property type="match status" value="1"/>
</dbReference>
<dbReference type="PANTHER" id="PTHR33280:SF6">
    <property type="entry name" value="LARGE RIBOSOMAL SUBUNIT PROTEIN BL31A"/>
    <property type="match status" value="1"/>
</dbReference>
<dbReference type="Pfam" id="PF01197">
    <property type="entry name" value="Ribosomal_L31"/>
    <property type="match status" value="1"/>
</dbReference>
<dbReference type="PRINTS" id="PR01249">
    <property type="entry name" value="RIBOSOMALL31"/>
</dbReference>
<dbReference type="SUPFAM" id="SSF143800">
    <property type="entry name" value="L28p-like"/>
    <property type="match status" value="1"/>
</dbReference>
<dbReference type="PROSITE" id="PS01143">
    <property type="entry name" value="RIBOSOMAL_L31"/>
    <property type="match status" value="1"/>
</dbReference>
<evidence type="ECO:0000255" key="1">
    <source>
        <dbReference type="HAMAP-Rule" id="MF_00502"/>
    </source>
</evidence>
<evidence type="ECO:0000305" key="2"/>
<keyword id="KW-0687">Ribonucleoprotein</keyword>
<keyword id="KW-0689">Ribosomal protein</keyword>
<name>RL31B_XANAC</name>